<protein>
    <recommendedName>
        <fullName evidence="1">Protein translocase subunit SecA</fullName>
        <ecNumber evidence="1">7.4.2.8</ecNumber>
    </recommendedName>
</protein>
<dbReference type="EC" id="7.4.2.8" evidence="1"/>
<dbReference type="EMBL" id="CP000679">
    <property type="protein sequence ID" value="ABP66927.1"/>
    <property type="molecule type" value="Genomic_DNA"/>
</dbReference>
<dbReference type="RefSeq" id="WP_011916862.1">
    <property type="nucleotide sequence ID" value="NC_009437.1"/>
</dbReference>
<dbReference type="SMR" id="A4XJ42"/>
<dbReference type="STRING" id="351627.Csac_1325"/>
<dbReference type="KEGG" id="csc:Csac_1325"/>
<dbReference type="eggNOG" id="COG0653">
    <property type="taxonomic scope" value="Bacteria"/>
</dbReference>
<dbReference type="HOGENOM" id="CLU_005314_3_0_9"/>
<dbReference type="OrthoDB" id="9805579at2"/>
<dbReference type="Proteomes" id="UP000000256">
    <property type="component" value="Chromosome"/>
</dbReference>
<dbReference type="GO" id="GO:0031522">
    <property type="term" value="C:cell envelope Sec protein transport complex"/>
    <property type="evidence" value="ECO:0007669"/>
    <property type="project" value="TreeGrafter"/>
</dbReference>
<dbReference type="GO" id="GO:0005829">
    <property type="term" value="C:cytosol"/>
    <property type="evidence" value="ECO:0007669"/>
    <property type="project" value="TreeGrafter"/>
</dbReference>
<dbReference type="GO" id="GO:0005886">
    <property type="term" value="C:plasma membrane"/>
    <property type="evidence" value="ECO:0007669"/>
    <property type="project" value="UniProtKB-SubCell"/>
</dbReference>
<dbReference type="GO" id="GO:0005524">
    <property type="term" value="F:ATP binding"/>
    <property type="evidence" value="ECO:0007669"/>
    <property type="project" value="UniProtKB-UniRule"/>
</dbReference>
<dbReference type="GO" id="GO:0046872">
    <property type="term" value="F:metal ion binding"/>
    <property type="evidence" value="ECO:0007669"/>
    <property type="project" value="UniProtKB-KW"/>
</dbReference>
<dbReference type="GO" id="GO:0008564">
    <property type="term" value="F:protein-exporting ATPase activity"/>
    <property type="evidence" value="ECO:0007669"/>
    <property type="project" value="UniProtKB-EC"/>
</dbReference>
<dbReference type="GO" id="GO:0065002">
    <property type="term" value="P:intracellular protein transmembrane transport"/>
    <property type="evidence" value="ECO:0007669"/>
    <property type="project" value="UniProtKB-UniRule"/>
</dbReference>
<dbReference type="GO" id="GO:0017038">
    <property type="term" value="P:protein import"/>
    <property type="evidence" value="ECO:0007669"/>
    <property type="project" value="InterPro"/>
</dbReference>
<dbReference type="GO" id="GO:0006605">
    <property type="term" value="P:protein targeting"/>
    <property type="evidence" value="ECO:0007669"/>
    <property type="project" value="UniProtKB-UniRule"/>
</dbReference>
<dbReference type="GO" id="GO:0043952">
    <property type="term" value="P:protein transport by the Sec complex"/>
    <property type="evidence" value="ECO:0007669"/>
    <property type="project" value="TreeGrafter"/>
</dbReference>
<dbReference type="CDD" id="cd17928">
    <property type="entry name" value="DEXDc_SecA"/>
    <property type="match status" value="1"/>
</dbReference>
<dbReference type="CDD" id="cd18803">
    <property type="entry name" value="SF2_C_secA"/>
    <property type="match status" value="1"/>
</dbReference>
<dbReference type="FunFam" id="3.40.50.300:FF:000694">
    <property type="entry name" value="Preprotein translocase subunit SecA"/>
    <property type="match status" value="1"/>
</dbReference>
<dbReference type="FunFam" id="3.90.1440.10:FF:000001">
    <property type="entry name" value="Preprotein translocase subunit SecA"/>
    <property type="match status" value="1"/>
</dbReference>
<dbReference type="FunFam" id="3.40.50.300:FF:000334">
    <property type="entry name" value="Protein translocase subunit SecA"/>
    <property type="match status" value="1"/>
</dbReference>
<dbReference type="Gene3D" id="1.10.3060.10">
    <property type="entry name" value="Helical scaffold and wing domains of SecA"/>
    <property type="match status" value="1"/>
</dbReference>
<dbReference type="Gene3D" id="3.40.50.300">
    <property type="entry name" value="P-loop containing nucleotide triphosphate hydrolases"/>
    <property type="match status" value="3"/>
</dbReference>
<dbReference type="Gene3D" id="3.90.1440.10">
    <property type="entry name" value="SecA, preprotein cross-linking domain"/>
    <property type="match status" value="1"/>
</dbReference>
<dbReference type="HAMAP" id="MF_01382">
    <property type="entry name" value="SecA"/>
    <property type="match status" value="1"/>
</dbReference>
<dbReference type="InterPro" id="IPR014001">
    <property type="entry name" value="Helicase_ATP-bd"/>
</dbReference>
<dbReference type="InterPro" id="IPR001650">
    <property type="entry name" value="Helicase_C-like"/>
</dbReference>
<dbReference type="InterPro" id="IPR027417">
    <property type="entry name" value="P-loop_NTPase"/>
</dbReference>
<dbReference type="InterPro" id="IPR004027">
    <property type="entry name" value="SEC_C_motif"/>
</dbReference>
<dbReference type="InterPro" id="IPR000185">
    <property type="entry name" value="SecA"/>
</dbReference>
<dbReference type="InterPro" id="IPR020937">
    <property type="entry name" value="SecA_CS"/>
</dbReference>
<dbReference type="InterPro" id="IPR011115">
    <property type="entry name" value="SecA_DEAD"/>
</dbReference>
<dbReference type="InterPro" id="IPR014018">
    <property type="entry name" value="SecA_motor_DEAD"/>
</dbReference>
<dbReference type="InterPro" id="IPR011130">
    <property type="entry name" value="SecA_preprotein_X-link_dom"/>
</dbReference>
<dbReference type="InterPro" id="IPR044722">
    <property type="entry name" value="SecA_SF2_C"/>
</dbReference>
<dbReference type="InterPro" id="IPR011116">
    <property type="entry name" value="SecA_Wing/Scaffold"/>
</dbReference>
<dbReference type="InterPro" id="IPR036266">
    <property type="entry name" value="SecA_Wing/Scaffold_sf"/>
</dbReference>
<dbReference type="InterPro" id="IPR036670">
    <property type="entry name" value="SecA_X-link_sf"/>
</dbReference>
<dbReference type="NCBIfam" id="NF006630">
    <property type="entry name" value="PRK09200.1"/>
    <property type="match status" value="1"/>
</dbReference>
<dbReference type="NCBIfam" id="NF009538">
    <property type="entry name" value="PRK12904.1"/>
    <property type="match status" value="1"/>
</dbReference>
<dbReference type="NCBIfam" id="TIGR00963">
    <property type="entry name" value="secA"/>
    <property type="match status" value="1"/>
</dbReference>
<dbReference type="PANTHER" id="PTHR30612:SF0">
    <property type="entry name" value="CHLOROPLAST PROTEIN-TRANSPORTING ATPASE"/>
    <property type="match status" value="1"/>
</dbReference>
<dbReference type="PANTHER" id="PTHR30612">
    <property type="entry name" value="SECA INNER MEMBRANE COMPONENT OF SEC PROTEIN SECRETION SYSTEM"/>
    <property type="match status" value="1"/>
</dbReference>
<dbReference type="Pfam" id="PF21090">
    <property type="entry name" value="P-loop_SecA"/>
    <property type="match status" value="1"/>
</dbReference>
<dbReference type="Pfam" id="PF02810">
    <property type="entry name" value="SEC-C"/>
    <property type="match status" value="1"/>
</dbReference>
<dbReference type="Pfam" id="PF07517">
    <property type="entry name" value="SecA_DEAD"/>
    <property type="match status" value="1"/>
</dbReference>
<dbReference type="Pfam" id="PF01043">
    <property type="entry name" value="SecA_PP_bind"/>
    <property type="match status" value="1"/>
</dbReference>
<dbReference type="Pfam" id="PF07516">
    <property type="entry name" value="SecA_SW"/>
    <property type="match status" value="1"/>
</dbReference>
<dbReference type="PRINTS" id="PR00906">
    <property type="entry name" value="SECA"/>
</dbReference>
<dbReference type="SMART" id="SM00957">
    <property type="entry name" value="SecA_DEAD"/>
    <property type="match status" value="1"/>
</dbReference>
<dbReference type="SMART" id="SM00958">
    <property type="entry name" value="SecA_PP_bind"/>
    <property type="match status" value="1"/>
</dbReference>
<dbReference type="SUPFAM" id="SSF81886">
    <property type="entry name" value="Helical scaffold and wing domains of SecA"/>
    <property type="match status" value="1"/>
</dbReference>
<dbReference type="SUPFAM" id="SSF52540">
    <property type="entry name" value="P-loop containing nucleoside triphosphate hydrolases"/>
    <property type="match status" value="2"/>
</dbReference>
<dbReference type="SUPFAM" id="SSF81767">
    <property type="entry name" value="Pre-protein crosslinking domain of SecA"/>
    <property type="match status" value="1"/>
</dbReference>
<dbReference type="PROSITE" id="PS01312">
    <property type="entry name" value="SECA"/>
    <property type="match status" value="1"/>
</dbReference>
<dbReference type="PROSITE" id="PS51196">
    <property type="entry name" value="SECA_MOTOR_DEAD"/>
    <property type="match status" value="1"/>
</dbReference>
<name>SECA_CALS8</name>
<sequence length="848" mass="97422">MLKIIEKLIGSYSEREIKKILPIVDKIESLAPEYERLTDAELRQKTDIFKERLKNGETLDDILPEAFAAVREAAWRTLKMRHFRVQLIGGIVLHQGRIAEMKTGEGKTLVATLPAYLNALEGKGVHIVTVNDYLAKRDAEWMGPIYNFLGLSVGVIVHGLTSEERRKAYNCDVTYGTNNEFGFDYLRDNMAIYKEELVQRELNYAIIDEVDSILIDEARTPLIISGPAEKSTDLYKRADNFVRRLKPLYYNSDDDKQMPDTTGYDYIVNEKRHTVALTEEGIKKAEKYFGVTNLADPENATLHHHIIQALKAHALMKRDRDYVVKDGQVIIVDEFTGRLMYGRRFSEGLHQAIEAKEGVRIERESRTLATITFQNYFRLYKKLAGMTGTAKTEEQEFREIYKLDVIEIPTHKPMIRIDHPDKVYKTEKAKFEAIVEEIVETHKKGQPVLVGTVSIEKSEMLSEMLKKRGIKHEVLNAKHHEKEAMIIAKAGQKGAVTIATNMAGRGTDIVLGEGVAELGGLKVIGTERHESRRIDNQLRGRAGRQGDPGESRFYVSLEDDLMRLFGSERIKRLVESLGLPDDQPIEHKLLSDAIEKAQKRVEARNFEIRKHLLQFDDVLNKQREIIYSQRRKVLEGENLRDSILNMIDELVDYKIKVYTGESPHPDDWDIKGLLQDLKFIFLDGELSEQDARNMTKDELKEKLISIAKEKYLKKEQEVGELMRELERVVLLRVVDMHWMDHIDAVDQLREGISLRAIGQKDPIVEFRFEAFEMFDQMIKRIQEDTIKIILHANVENMPKRERVVKEMYENSPSDAPVRKSVVKTQKVGRNDPCPCGSGKKYKKCCGAV</sequence>
<organism>
    <name type="scientific">Caldicellulosiruptor saccharolyticus (strain ATCC 43494 / DSM 8903 / Tp8T 6331)</name>
    <dbReference type="NCBI Taxonomy" id="351627"/>
    <lineage>
        <taxon>Bacteria</taxon>
        <taxon>Bacillati</taxon>
        <taxon>Bacillota</taxon>
        <taxon>Bacillota incertae sedis</taxon>
        <taxon>Caldicellulosiruptorales</taxon>
        <taxon>Caldicellulosiruptoraceae</taxon>
        <taxon>Caldicellulosiruptor</taxon>
    </lineage>
</organism>
<gene>
    <name evidence="1" type="primary">secA</name>
    <name type="ordered locus">Csac_1325</name>
</gene>
<evidence type="ECO:0000255" key="1">
    <source>
        <dbReference type="HAMAP-Rule" id="MF_01382"/>
    </source>
</evidence>
<feature type="chain" id="PRO_0000320760" description="Protein translocase subunit SecA">
    <location>
        <begin position="1"/>
        <end position="848"/>
    </location>
</feature>
<feature type="binding site" evidence="1">
    <location>
        <position position="86"/>
    </location>
    <ligand>
        <name>ATP</name>
        <dbReference type="ChEBI" id="CHEBI:30616"/>
    </ligand>
</feature>
<feature type="binding site" evidence="1">
    <location>
        <begin position="104"/>
        <end position="108"/>
    </location>
    <ligand>
        <name>ATP</name>
        <dbReference type="ChEBI" id="CHEBI:30616"/>
    </ligand>
</feature>
<feature type="binding site" evidence="1">
    <location>
        <position position="508"/>
    </location>
    <ligand>
        <name>ATP</name>
        <dbReference type="ChEBI" id="CHEBI:30616"/>
    </ligand>
</feature>
<feature type="binding site" evidence="1">
    <location>
        <position position="833"/>
    </location>
    <ligand>
        <name>Zn(2+)</name>
        <dbReference type="ChEBI" id="CHEBI:29105"/>
    </ligand>
</feature>
<feature type="binding site" evidence="1">
    <location>
        <position position="835"/>
    </location>
    <ligand>
        <name>Zn(2+)</name>
        <dbReference type="ChEBI" id="CHEBI:29105"/>
    </ligand>
</feature>
<feature type="binding site" evidence="1">
    <location>
        <position position="844"/>
    </location>
    <ligand>
        <name>Zn(2+)</name>
        <dbReference type="ChEBI" id="CHEBI:29105"/>
    </ligand>
</feature>
<feature type="binding site" evidence="1">
    <location>
        <position position="845"/>
    </location>
    <ligand>
        <name>Zn(2+)</name>
        <dbReference type="ChEBI" id="CHEBI:29105"/>
    </ligand>
</feature>
<keyword id="KW-0067">ATP-binding</keyword>
<keyword id="KW-1003">Cell membrane</keyword>
<keyword id="KW-0963">Cytoplasm</keyword>
<keyword id="KW-0472">Membrane</keyword>
<keyword id="KW-0479">Metal-binding</keyword>
<keyword id="KW-0547">Nucleotide-binding</keyword>
<keyword id="KW-0653">Protein transport</keyword>
<keyword id="KW-1278">Translocase</keyword>
<keyword id="KW-0811">Translocation</keyword>
<keyword id="KW-0813">Transport</keyword>
<keyword id="KW-0862">Zinc</keyword>
<reference key="1">
    <citation type="submission" date="2007-04" db="EMBL/GenBank/DDBJ databases">
        <title>Genome sequence of the thermophilic hydrogen-producing bacterium Caldicellulosiruptor saccharolyticus DSM 8903.</title>
        <authorList>
            <person name="Copeland A."/>
            <person name="Lucas S."/>
            <person name="Lapidus A."/>
            <person name="Barry K."/>
            <person name="Detter J.C."/>
            <person name="Glavina del Rio T."/>
            <person name="Hammon N."/>
            <person name="Israni S."/>
            <person name="Dalin E."/>
            <person name="Tice H."/>
            <person name="Pitluck S."/>
            <person name="Kiss H."/>
            <person name="Brettin T."/>
            <person name="Bruce D."/>
            <person name="Han C."/>
            <person name="Schmutz J."/>
            <person name="Larimer F."/>
            <person name="Land M."/>
            <person name="Hauser L."/>
            <person name="Kyrpides N."/>
            <person name="Lykidis A."/>
            <person name="van de Werken H.J.G."/>
            <person name="Verhaart M.R.A."/>
            <person name="VanFossen A.L."/>
            <person name="Lewis D.L."/>
            <person name="Nichols J.D."/>
            <person name="Goorissen H.P."/>
            <person name="van Niel E.W.J."/>
            <person name="Stams F.J.M."/>
            <person name="Willquist K.U."/>
            <person name="Ward D.E."/>
            <person name="van der Oost J."/>
            <person name="Kelly R.M."/>
            <person name="Kengen S.M.W."/>
            <person name="Richardson P."/>
        </authorList>
    </citation>
    <scope>NUCLEOTIDE SEQUENCE [LARGE SCALE GENOMIC DNA]</scope>
    <source>
        <strain>ATCC 43494 / DSM 8903 / Tp8T 6331</strain>
    </source>
</reference>
<comment type="function">
    <text evidence="1">Part of the Sec protein translocase complex. Interacts with the SecYEG preprotein conducting channel. Has a central role in coupling the hydrolysis of ATP to the transfer of proteins into and across the cell membrane, serving as an ATP-driven molecular motor driving the stepwise translocation of polypeptide chains across the membrane.</text>
</comment>
<comment type="catalytic activity">
    <reaction evidence="1">
        <text>ATP + H2O + cellular proteinSide 1 = ADP + phosphate + cellular proteinSide 2.</text>
        <dbReference type="EC" id="7.4.2.8"/>
    </reaction>
</comment>
<comment type="cofactor">
    <cofactor evidence="1">
        <name>Zn(2+)</name>
        <dbReference type="ChEBI" id="CHEBI:29105"/>
    </cofactor>
    <text evidence="1">May bind 1 zinc ion per subunit.</text>
</comment>
<comment type="subunit">
    <text evidence="1">Monomer and homodimer. Part of the essential Sec protein translocation apparatus which comprises SecA, SecYEG and auxiliary proteins SecDF. Other proteins may also be involved.</text>
</comment>
<comment type="subcellular location">
    <subcellularLocation>
        <location evidence="1">Cell membrane</location>
        <topology evidence="1">Peripheral membrane protein</topology>
        <orientation evidence="1">Cytoplasmic side</orientation>
    </subcellularLocation>
    <subcellularLocation>
        <location evidence="1">Cytoplasm</location>
    </subcellularLocation>
    <text evidence="1">Distribution is 50-50.</text>
</comment>
<comment type="similarity">
    <text evidence="1">Belongs to the SecA family.</text>
</comment>
<accession>A4XJ42</accession>
<proteinExistence type="inferred from homology"/>